<protein>
    <recommendedName>
        <fullName evidence="2">Outer capsid glycoprotein VP7</fullName>
    </recommendedName>
</protein>
<proteinExistence type="inferred from homology"/>
<sequence>MYGIEYTTVLTFLISVILLNYVLKSLTRIMDFIIYRFLLIIVILSPFLNAPNYGINLPITGSMDTPCTNSTREEVFLTSTLCWYYPTEAATEINDNSWHGTLSQLFLTKGWPTGSIYFKAYTNIASFSVDPQLYCDYNLVLMKYDATLQLDMSELADLLLNEWLCNPMDITLYYYQQTDEANKWISMGSSCTIKVCPLNTQTLGIGCLTTDTNTFEEVATAEKLVITDVVDGANHKLNVTTNTCTIRNCKKLGPRENVAVIQVGGSDILDITADPTTAPQTERMMRVNWKKWWQVFYTIVDYVNQIVQAMSKRSRSLNSAAFTNRI</sequence>
<evidence type="ECO:0000255" key="1"/>
<evidence type="ECO:0000255" key="2">
    <source>
        <dbReference type="HAMAP-Rule" id="MF_04131"/>
    </source>
</evidence>
<evidence type="ECO:0000305" key="3"/>
<organismHost>
    <name type="scientific">Homo sapiens</name>
    <name type="common">Human</name>
    <dbReference type="NCBI Taxonomy" id="9606"/>
</organismHost>
<dbReference type="EMBL" id="D86280">
    <property type="protein sequence ID" value="BAA23300.1"/>
    <property type="molecule type" value="Genomic_RNA"/>
</dbReference>
<dbReference type="SMR" id="O39731"/>
<dbReference type="GO" id="GO:0044166">
    <property type="term" value="C:host cell endoplasmic reticulum lumen"/>
    <property type="evidence" value="ECO:0007669"/>
    <property type="project" value="UniProtKB-SubCell"/>
</dbReference>
<dbReference type="GO" id="GO:0039621">
    <property type="term" value="C:T=13 icosahedral viral capsid"/>
    <property type="evidence" value="ECO:0007669"/>
    <property type="project" value="UniProtKB-UniRule"/>
</dbReference>
<dbReference type="GO" id="GO:0039624">
    <property type="term" value="C:viral outer capsid"/>
    <property type="evidence" value="ECO:0007669"/>
    <property type="project" value="UniProtKB-UniRule"/>
</dbReference>
<dbReference type="GO" id="GO:0046872">
    <property type="term" value="F:metal ion binding"/>
    <property type="evidence" value="ECO:0007669"/>
    <property type="project" value="UniProtKB-KW"/>
</dbReference>
<dbReference type="FunFam" id="2.60.120.800:FF:000001">
    <property type="entry name" value="Outer capsid glycoprotein VP7"/>
    <property type="match status" value="1"/>
</dbReference>
<dbReference type="Gene3D" id="3.40.50.11130">
    <property type="entry name" value="Glycoprotein VP7, domain 1"/>
    <property type="match status" value="1"/>
</dbReference>
<dbReference type="Gene3D" id="2.60.120.800">
    <property type="entry name" value="Rotavirus outer-layer protein VP7, domain 2"/>
    <property type="match status" value="1"/>
</dbReference>
<dbReference type="HAMAP" id="MF_04130">
    <property type="entry name" value="Rota_VP7"/>
    <property type="match status" value="1"/>
</dbReference>
<dbReference type="HAMAP" id="MF_04131">
    <property type="entry name" value="Rota_VP7_A"/>
    <property type="match status" value="1"/>
</dbReference>
<dbReference type="InterPro" id="IPR001963">
    <property type="entry name" value="VP7"/>
</dbReference>
<dbReference type="InterPro" id="IPR042207">
    <property type="entry name" value="VP7_1"/>
</dbReference>
<dbReference type="InterPro" id="IPR042210">
    <property type="entry name" value="VP7_2"/>
</dbReference>
<dbReference type="Pfam" id="PF00434">
    <property type="entry name" value="VP7"/>
    <property type="match status" value="1"/>
</dbReference>
<reference key="1">
    <citation type="journal article" date="1997" name="Arch. Virol.">
        <title>Genetic variation in the VP7 gene of human rotavirus serotype 3 (G3 type) isolated in China and Japan.</title>
        <authorList>
            <person name="Wen L."/>
            <person name="Nakayama M."/>
            <person name="Yamanishi Y."/>
            <person name="Nishio O."/>
            <person name="Fang Z.Y."/>
            <person name="Nakagomi O."/>
            <person name="Araki K."/>
            <person name="Nishimura S."/>
            <person name="Hasegawa A."/>
            <person name="Muller W.E."/>
            <person name="Ushijima H."/>
        </authorList>
    </citation>
    <scope>NUCLEOTIDE SEQUENCE [GENOMIC RNA]</scope>
</reference>
<organism>
    <name type="scientific">Rotavirus A (strain RVA/Human/Japan/MO/1982/G3P1A[8])</name>
    <name type="common">RV-A</name>
    <dbReference type="NCBI Taxonomy" id="10956"/>
    <lineage>
        <taxon>Viruses</taxon>
        <taxon>Riboviria</taxon>
        <taxon>Orthornavirae</taxon>
        <taxon>Duplornaviricota</taxon>
        <taxon>Resentoviricetes</taxon>
        <taxon>Reovirales</taxon>
        <taxon>Sedoreoviridae</taxon>
        <taxon>Rotavirus</taxon>
        <taxon>Rotavirus A</taxon>
    </lineage>
</organism>
<name>VP7_ROTHO</name>
<comment type="function">
    <text evidence="2">Calcium-binding protein that interacts with rotavirus cell receptors once the initial attachment by VP4 has been achieved. Rotavirus attachment and entry into the host cell probably involves multiple sequential contacts between the outer capsid proteins VP4 and VP7, and the cell receptors. Following entry into the host cell, low intracellular or intravesicular Ca(2+) concentration probably causes the calcium-stabilized VP7 trimers to dissociate from the virion. This step is probably necessary for the membrane-disrupting entry step and the release of VP4, which is locked onto the virion by VP7.</text>
</comment>
<comment type="subunit">
    <text evidence="2">Homotrimer; disulfide-linked. 2 Ca(2+) ions bound at each subunit interface in the trimer hold the trimer together. Interacts with the intermediate capsid protein VP6. Interacts with the outer capsid protein VP5*.</text>
</comment>
<comment type="subcellular location">
    <subcellularLocation>
        <location evidence="2">Virion</location>
    </subcellularLocation>
    <subcellularLocation>
        <location evidence="2">Host endoplasmic reticulum lumen</location>
    </subcellularLocation>
    <text evidence="2">The outer layer contains 780 copies of VP7, grouped as 260 trimers. Immature double-layered particles assembled in the cytoplasm bud across the membrane of the endoplasmic reticulum, acquiring during this process a transient lipid membrane that is modified with the ER resident viral glycoproteins NSP4 and VP7; these enveloped particles also contain VP4. As the particles move towards the interior of the ER cisternae, the transient lipid membrane and the non-structural protein NSP4 are lost, while the virus surface proteins VP4 and VP7 rearrange to form the outermost virus protein layer, yielding mature infectious triple-layered particles.</text>
</comment>
<comment type="alternative products">
    <event type="alternative initiation"/>
    <isoform>
        <id>O39731-1</id>
        <name>1</name>
        <sequence type="displayed"/>
    </isoform>
    <isoform>
        <id>O39731-2</id>
        <name>2</name>
        <sequence type="described" ref="VSP_038623"/>
    </isoform>
</comment>
<comment type="PTM">
    <text evidence="2">N-glycosylated.</text>
</comment>
<comment type="PTM">
    <text evidence="2">The N-terminus is blocked possibly by pyroglutamic acid.</text>
</comment>
<comment type="miscellaneous">
    <text evidence="2">Some rotavirus strains are neuraminidase-sensitive and require sialic acid to attach to the cell surface. Some rotavirus strains are integrin-dependent. Some rotavirus strains depend on ganglioside for their entry into the host cell. Hsp70 also seems to be involved in the entry of some strains.</text>
</comment>
<comment type="miscellaneous">
    <text evidence="2">In group A rotaviruses, VP7 defines the G serotype.</text>
</comment>
<comment type="miscellaneous">
    <molecule>Isoform 2</molecule>
    <text evidence="3">Produced by alternative initiation at Met-30 of isoform 1.</text>
</comment>
<comment type="similarity">
    <text evidence="2">Belongs to the rotavirus VP7 family.</text>
</comment>
<keyword id="KW-0024">Alternative initiation</keyword>
<keyword id="KW-0106">Calcium</keyword>
<keyword id="KW-0167">Capsid protein</keyword>
<keyword id="KW-1015">Disulfide bond</keyword>
<keyword id="KW-0325">Glycoprotein</keyword>
<keyword id="KW-1038">Host endoplasmic reticulum</keyword>
<keyword id="KW-0945">Host-virus interaction</keyword>
<keyword id="KW-0479">Metal-binding</keyword>
<keyword id="KW-1152">Outer capsid protein</keyword>
<keyword id="KW-0732">Signal</keyword>
<keyword id="KW-1146">T=13 icosahedral capsid protein</keyword>
<keyword id="KW-0946">Virion</keyword>
<accession>O39731</accession>
<feature type="signal peptide" evidence="2">
    <location>
        <begin position="1"/>
        <end position="50"/>
    </location>
</feature>
<feature type="chain" id="PRO_0000369115" description="Outer capsid glycoprotein VP7" evidence="2">
    <location>
        <begin position="51"/>
        <end position="326"/>
    </location>
</feature>
<feature type="region of interest" description="CNP motif; interaction with ITGAV/ITGB3" evidence="2">
    <location>
        <begin position="165"/>
        <end position="167"/>
    </location>
</feature>
<feature type="region of interest" description="GPR motif; interaction with ITGAX/ITGB2" evidence="2">
    <location>
        <begin position="253"/>
        <end position="255"/>
    </location>
</feature>
<feature type="binding site" evidence="2">
    <location>
        <position position="95"/>
    </location>
    <ligand>
        <name>Ca(2+)</name>
        <dbReference type="ChEBI" id="CHEBI:29108"/>
        <label>1</label>
    </ligand>
</feature>
<feature type="binding site" evidence="2">
    <location>
        <position position="177"/>
    </location>
    <ligand>
        <name>Ca(2+)</name>
        <dbReference type="ChEBI" id="CHEBI:29108"/>
        <label>2</label>
    </ligand>
</feature>
<feature type="binding site" evidence="2">
    <location>
        <position position="206"/>
    </location>
    <ligand>
        <name>Ca(2+)</name>
        <dbReference type="ChEBI" id="CHEBI:29108"/>
        <label>1</label>
    </ligand>
</feature>
<feature type="binding site" evidence="2">
    <location>
        <position position="214"/>
    </location>
    <ligand>
        <name>Ca(2+)</name>
        <dbReference type="ChEBI" id="CHEBI:29108"/>
        <label>1</label>
    </ligand>
</feature>
<feature type="binding site" evidence="2">
    <location>
        <position position="216"/>
    </location>
    <ligand>
        <name>Ca(2+)</name>
        <dbReference type="ChEBI" id="CHEBI:29108"/>
        <label>1</label>
    </ligand>
</feature>
<feature type="binding site" evidence="2">
    <location>
        <position position="228"/>
    </location>
    <ligand>
        <name>Ca(2+)</name>
        <dbReference type="ChEBI" id="CHEBI:29108"/>
        <label>2</label>
    </ligand>
</feature>
<feature type="binding site" evidence="2">
    <location>
        <position position="229"/>
    </location>
    <ligand>
        <name>Ca(2+)</name>
        <dbReference type="ChEBI" id="CHEBI:29108"/>
        <label>2</label>
    </ligand>
</feature>
<feature type="binding site" evidence="2">
    <location>
        <position position="231"/>
    </location>
    <ligand>
        <name>Ca(2+)</name>
        <dbReference type="ChEBI" id="CHEBI:29108"/>
        <label>2</label>
    </ligand>
</feature>
<feature type="binding site" evidence="2">
    <location>
        <position position="301"/>
    </location>
    <ligand>
        <name>Ca(2+)</name>
        <dbReference type="ChEBI" id="CHEBI:29108"/>
        <label>2</label>
    </ligand>
</feature>
<feature type="glycosylation site" description="N-linked (GlcNAc...) asparagine; by host" evidence="1">
    <location>
        <position position="69"/>
    </location>
</feature>
<feature type="glycosylation site" description="N-linked (GlcNAc...) asparagine; by host" evidence="1">
    <location>
        <position position="238"/>
    </location>
</feature>
<feature type="disulfide bond" evidence="2">
    <location>
        <begin position="82"/>
        <end position="135"/>
    </location>
</feature>
<feature type="disulfide bond" evidence="2">
    <location>
        <begin position="165"/>
        <end position="249"/>
    </location>
</feature>
<feature type="disulfide bond" evidence="2">
    <location>
        <begin position="191"/>
        <end position="244"/>
    </location>
</feature>
<feature type="disulfide bond" evidence="2">
    <location>
        <begin position="196"/>
        <end position="207"/>
    </location>
</feature>
<feature type="splice variant" id="VSP_038623" description="In isoform 2." evidence="3">
    <location>
        <begin position="1"/>
        <end position="29"/>
    </location>
</feature>